<dbReference type="EC" id="6.1.1.15" evidence="1"/>
<dbReference type="EMBL" id="CP001080">
    <property type="protein sequence ID" value="ACD67297.1"/>
    <property type="molecule type" value="Genomic_DNA"/>
</dbReference>
<dbReference type="RefSeq" id="WP_012460353.1">
    <property type="nucleotide sequence ID" value="NC_010730.1"/>
</dbReference>
<dbReference type="SMR" id="B2V6W5"/>
<dbReference type="STRING" id="436114.SYO3AOP1_1699"/>
<dbReference type="KEGG" id="sul:SYO3AOP1_1699"/>
<dbReference type="eggNOG" id="COG0442">
    <property type="taxonomic scope" value="Bacteria"/>
</dbReference>
<dbReference type="HOGENOM" id="CLU_016739_0_0_0"/>
<dbReference type="GO" id="GO:0005829">
    <property type="term" value="C:cytosol"/>
    <property type="evidence" value="ECO:0007669"/>
    <property type="project" value="TreeGrafter"/>
</dbReference>
<dbReference type="GO" id="GO:0002161">
    <property type="term" value="F:aminoacyl-tRNA deacylase activity"/>
    <property type="evidence" value="ECO:0007669"/>
    <property type="project" value="InterPro"/>
</dbReference>
<dbReference type="GO" id="GO:0005524">
    <property type="term" value="F:ATP binding"/>
    <property type="evidence" value="ECO:0007669"/>
    <property type="project" value="UniProtKB-UniRule"/>
</dbReference>
<dbReference type="GO" id="GO:0004827">
    <property type="term" value="F:proline-tRNA ligase activity"/>
    <property type="evidence" value="ECO:0007669"/>
    <property type="project" value="UniProtKB-UniRule"/>
</dbReference>
<dbReference type="GO" id="GO:0006433">
    <property type="term" value="P:prolyl-tRNA aminoacylation"/>
    <property type="evidence" value="ECO:0007669"/>
    <property type="project" value="UniProtKB-UniRule"/>
</dbReference>
<dbReference type="CDD" id="cd04334">
    <property type="entry name" value="ProRS-INS"/>
    <property type="match status" value="1"/>
</dbReference>
<dbReference type="CDD" id="cd00861">
    <property type="entry name" value="ProRS_anticodon_short"/>
    <property type="match status" value="1"/>
</dbReference>
<dbReference type="CDD" id="cd00779">
    <property type="entry name" value="ProRS_core_prok"/>
    <property type="match status" value="1"/>
</dbReference>
<dbReference type="FunFam" id="3.30.930.10:FF:000065">
    <property type="entry name" value="Proline--tRNA ligase"/>
    <property type="match status" value="1"/>
</dbReference>
<dbReference type="FunFam" id="3.30.930.10:FF:000066">
    <property type="entry name" value="Proline--tRNA ligase"/>
    <property type="match status" value="1"/>
</dbReference>
<dbReference type="Gene3D" id="3.40.50.800">
    <property type="entry name" value="Anticodon-binding domain"/>
    <property type="match status" value="1"/>
</dbReference>
<dbReference type="Gene3D" id="3.30.930.10">
    <property type="entry name" value="Bira Bifunctional Protein, Domain 2"/>
    <property type="match status" value="2"/>
</dbReference>
<dbReference type="Gene3D" id="3.90.960.10">
    <property type="entry name" value="YbaK/aminoacyl-tRNA synthetase-associated domain"/>
    <property type="match status" value="1"/>
</dbReference>
<dbReference type="HAMAP" id="MF_01569">
    <property type="entry name" value="Pro_tRNA_synth_type1"/>
    <property type="match status" value="1"/>
</dbReference>
<dbReference type="InterPro" id="IPR002314">
    <property type="entry name" value="aa-tRNA-synt_IIb"/>
</dbReference>
<dbReference type="InterPro" id="IPR006195">
    <property type="entry name" value="aa-tRNA-synth_II"/>
</dbReference>
<dbReference type="InterPro" id="IPR045864">
    <property type="entry name" value="aa-tRNA-synth_II/BPL/LPL"/>
</dbReference>
<dbReference type="InterPro" id="IPR004154">
    <property type="entry name" value="Anticodon-bd"/>
</dbReference>
<dbReference type="InterPro" id="IPR036621">
    <property type="entry name" value="Anticodon-bd_dom_sf"/>
</dbReference>
<dbReference type="InterPro" id="IPR002316">
    <property type="entry name" value="Pro-tRNA-ligase_IIa"/>
</dbReference>
<dbReference type="InterPro" id="IPR004500">
    <property type="entry name" value="Pro-tRNA-synth_IIa_bac-type"/>
</dbReference>
<dbReference type="InterPro" id="IPR023717">
    <property type="entry name" value="Pro-tRNA-Synthase_IIa_type1"/>
</dbReference>
<dbReference type="InterPro" id="IPR050062">
    <property type="entry name" value="Pro-tRNA_synthetase"/>
</dbReference>
<dbReference type="InterPro" id="IPR044140">
    <property type="entry name" value="ProRS_anticodon_short"/>
</dbReference>
<dbReference type="InterPro" id="IPR033730">
    <property type="entry name" value="ProRS_core_prok"/>
</dbReference>
<dbReference type="InterPro" id="IPR036754">
    <property type="entry name" value="YbaK/aa-tRNA-synt-asso_dom_sf"/>
</dbReference>
<dbReference type="InterPro" id="IPR007214">
    <property type="entry name" value="YbaK/aa-tRNA-synth-assoc-dom"/>
</dbReference>
<dbReference type="NCBIfam" id="NF006625">
    <property type="entry name" value="PRK09194.1"/>
    <property type="match status" value="1"/>
</dbReference>
<dbReference type="NCBIfam" id="TIGR00409">
    <property type="entry name" value="proS_fam_II"/>
    <property type="match status" value="1"/>
</dbReference>
<dbReference type="PANTHER" id="PTHR42753">
    <property type="entry name" value="MITOCHONDRIAL RIBOSOME PROTEIN L39/PROLYL-TRNA LIGASE FAMILY MEMBER"/>
    <property type="match status" value="1"/>
</dbReference>
<dbReference type="PANTHER" id="PTHR42753:SF2">
    <property type="entry name" value="PROLINE--TRNA LIGASE"/>
    <property type="match status" value="1"/>
</dbReference>
<dbReference type="Pfam" id="PF03129">
    <property type="entry name" value="HGTP_anticodon"/>
    <property type="match status" value="1"/>
</dbReference>
<dbReference type="Pfam" id="PF00587">
    <property type="entry name" value="tRNA-synt_2b"/>
    <property type="match status" value="1"/>
</dbReference>
<dbReference type="Pfam" id="PF04073">
    <property type="entry name" value="tRNA_edit"/>
    <property type="match status" value="1"/>
</dbReference>
<dbReference type="PRINTS" id="PR01046">
    <property type="entry name" value="TRNASYNTHPRO"/>
</dbReference>
<dbReference type="SUPFAM" id="SSF52954">
    <property type="entry name" value="Class II aaRS ABD-related"/>
    <property type="match status" value="1"/>
</dbReference>
<dbReference type="SUPFAM" id="SSF55681">
    <property type="entry name" value="Class II aaRS and biotin synthetases"/>
    <property type="match status" value="1"/>
</dbReference>
<dbReference type="SUPFAM" id="SSF55826">
    <property type="entry name" value="YbaK/ProRS associated domain"/>
    <property type="match status" value="1"/>
</dbReference>
<dbReference type="PROSITE" id="PS50862">
    <property type="entry name" value="AA_TRNA_LIGASE_II"/>
    <property type="match status" value="1"/>
</dbReference>
<evidence type="ECO:0000255" key="1">
    <source>
        <dbReference type="HAMAP-Rule" id="MF_01569"/>
    </source>
</evidence>
<comment type="function">
    <text evidence="1">Catalyzes the attachment of proline to tRNA(Pro) in a two-step reaction: proline is first activated by ATP to form Pro-AMP and then transferred to the acceptor end of tRNA(Pro). As ProRS can inadvertently accommodate and process non-cognate amino acids such as alanine and cysteine, to avoid such errors it has two additional distinct editing activities against alanine. One activity is designated as 'pretransfer' editing and involves the tRNA(Pro)-independent hydrolysis of activated Ala-AMP. The other activity is designated 'posttransfer' editing and involves deacylation of mischarged Ala-tRNA(Pro). The misacylated Cys-tRNA(Pro) is not edited by ProRS.</text>
</comment>
<comment type="catalytic activity">
    <reaction evidence="1">
        <text>tRNA(Pro) + L-proline + ATP = L-prolyl-tRNA(Pro) + AMP + diphosphate</text>
        <dbReference type="Rhea" id="RHEA:14305"/>
        <dbReference type="Rhea" id="RHEA-COMP:9700"/>
        <dbReference type="Rhea" id="RHEA-COMP:9702"/>
        <dbReference type="ChEBI" id="CHEBI:30616"/>
        <dbReference type="ChEBI" id="CHEBI:33019"/>
        <dbReference type="ChEBI" id="CHEBI:60039"/>
        <dbReference type="ChEBI" id="CHEBI:78442"/>
        <dbReference type="ChEBI" id="CHEBI:78532"/>
        <dbReference type="ChEBI" id="CHEBI:456215"/>
        <dbReference type="EC" id="6.1.1.15"/>
    </reaction>
</comment>
<comment type="subunit">
    <text evidence="1">Homodimer.</text>
</comment>
<comment type="subcellular location">
    <subcellularLocation>
        <location evidence="1">Cytoplasm</location>
    </subcellularLocation>
</comment>
<comment type="domain">
    <text evidence="1">Consists of three domains: the N-terminal catalytic domain, the editing domain and the C-terminal anticodon-binding domain.</text>
</comment>
<comment type="similarity">
    <text evidence="1">Belongs to the class-II aminoacyl-tRNA synthetase family. ProS type 1 subfamily.</text>
</comment>
<name>SYP_SULSY</name>
<accession>B2V6W5</accession>
<keyword id="KW-0030">Aminoacyl-tRNA synthetase</keyword>
<keyword id="KW-0067">ATP-binding</keyword>
<keyword id="KW-0963">Cytoplasm</keyword>
<keyword id="KW-0436">Ligase</keyword>
<keyword id="KW-0547">Nucleotide-binding</keyword>
<keyword id="KW-0648">Protein biosynthesis</keyword>
<gene>
    <name evidence="1" type="primary">proS</name>
    <name type="ordered locus">SYO3AOP1_1699</name>
</gene>
<proteinExistence type="inferred from homology"/>
<reference key="1">
    <citation type="journal article" date="2009" name="J. Bacteriol.">
        <title>Complete and draft genome sequences of six members of the Aquificales.</title>
        <authorList>
            <person name="Reysenbach A.-L."/>
            <person name="Hamamura N."/>
            <person name="Podar M."/>
            <person name="Griffiths E."/>
            <person name="Ferreira S."/>
            <person name="Hochstein R."/>
            <person name="Heidelberg J."/>
            <person name="Johnson J."/>
            <person name="Mead D."/>
            <person name="Pohorille A."/>
            <person name="Sarmiento M."/>
            <person name="Schweighofer K."/>
            <person name="Seshadri R."/>
            <person name="Voytek M.A."/>
        </authorList>
    </citation>
    <scope>NUCLEOTIDE SEQUENCE [LARGE SCALE GENOMIC DNA]</scope>
    <source>
        <strain>YO3AOP1</strain>
    </source>
</reference>
<feature type="chain" id="PRO_1000199431" description="Proline--tRNA ligase">
    <location>
        <begin position="1"/>
        <end position="564"/>
    </location>
</feature>
<organism>
    <name type="scientific">Sulfurihydrogenibium sp. (strain YO3AOP1)</name>
    <dbReference type="NCBI Taxonomy" id="436114"/>
    <lineage>
        <taxon>Bacteria</taxon>
        <taxon>Pseudomonadati</taxon>
        <taxon>Aquificota</taxon>
        <taxon>Aquificia</taxon>
        <taxon>Aquificales</taxon>
        <taxon>Hydrogenothermaceae</taxon>
        <taxon>Sulfurihydrogenibium</taxon>
    </lineage>
</organism>
<protein>
    <recommendedName>
        <fullName evidence="1">Proline--tRNA ligase</fullName>
        <ecNumber evidence="1">6.1.1.15</ecNumber>
    </recommendedName>
    <alternativeName>
        <fullName evidence="1">Prolyl-tRNA synthetase</fullName>
        <shortName evidence="1">ProRS</shortName>
    </alternativeName>
</protein>
<sequence length="564" mass="63953">MLASKFFMPTLKENPSDAVVPSHIYLVRGGFIRSLSAGIYEYLPLGLKVLRKIENIIRKHMDDSGALEVLLPILTPAELWKETGRWHVYGKELFRLKDRKDAEFALGPTHEETITDLVRKNVRSYKDLPLNFYQIQTKFRDEARPRYGLIRGREFIMKDGYSFDVSEEDAKKTYEVMKEAYHKIFKELGLDYLMVEADVGAIGGKFSHEFVVKVPSGEAHIVYCEKCGYAANVEAAKFHHHKLPPEEPKPIEKVYTPDIKSVEDVANFLNVPLTKLVKTLIYKIDDKDFVAVLIRGDRELNETKLANLFKAIDVRMATKEELESLGIPEGFVGPIGLNLPIYADFSLKELYNIVVGANEKDYHYINANIDRDFKVSGFYDLATAKEGDPCPVCHLPLKETTGLEVGHIFLLGTKYSESMKAYFVDKDGKEKSIIMGCYGIGVSRLISAIVEQYHDDKGIIWPENLAPFNVHILVLNPKDQESLNVGFDIYKKLKEKGLDVLLDERDESAGAKFKDADLIGIPHRIVIGKALKEGKVEYQKRDGSIKELVDVKLIINKLMDGYHG</sequence>